<evidence type="ECO:0000250" key="1"/>
<evidence type="ECO:0000305" key="2"/>
<organism>
    <name type="scientific">Oryza sativa subsp. japonica</name>
    <name type="common">Rice</name>
    <dbReference type="NCBI Taxonomy" id="39947"/>
    <lineage>
        <taxon>Eukaryota</taxon>
        <taxon>Viridiplantae</taxon>
        <taxon>Streptophyta</taxon>
        <taxon>Embryophyta</taxon>
        <taxon>Tracheophyta</taxon>
        <taxon>Spermatophyta</taxon>
        <taxon>Magnoliopsida</taxon>
        <taxon>Liliopsida</taxon>
        <taxon>Poales</taxon>
        <taxon>Poaceae</taxon>
        <taxon>BOP clade</taxon>
        <taxon>Oryzoideae</taxon>
        <taxon>Oryzeae</taxon>
        <taxon>Oryzinae</taxon>
        <taxon>Oryza</taxon>
        <taxon>Oryza sativa</taxon>
    </lineage>
</organism>
<name>AATC_ORYSJ</name>
<keyword id="KW-0032">Aminotransferase</keyword>
<keyword id="KW-0963">Cytoplasm</keyword>
<keyword id="KW-0663">Pyridoxal phosphate</keyword>
<keyword id="KW-1185">Reference proteome</keyword>
<keyword id="KW-0808">Transferase</keyword>
<dbReference type="EC" id="2.6.1.1"/>
<dbReference type="EMBL" id="D14673">
    <property type="protein sequence ID" value="BAA03504.1"/>
    <property type="molecule type" value="mRNA"/>
</dbReference>
<dbReference type="EMBL" id="AB110193">
    <property type="protein sequence ID" value="BAC78585.1"/>
    <property type="molecule type" value="mRNA"/>
</dbReference>
<dbReference type="EMBL" id="AP003256">
    <property type="protein sequence ID" value="BAB61211.1"/>
    <property type="molecule type" value="Genomic_DNA"/>
</dbReference>
<dbReference type="EMBL" id="AP003274">
    <property type="protein sequence ID" value="BAD87343.1"/>
    <property type="status" value="ALT_SEQ"/>
    <property type="molecule type" value="Genomic_DNA"/>
</dbReference>
<dbReference type="EMBL" id="AP014957">
    <property type="protein sequence ID" value="BAS74451.1"/>
    <property type="molecule type" value="Genomic_DNA"/>
</dbReference>
<dbReference type="PIR" id="JC5124">
    <property type="entry name" value="JC5124"/>
</dbReference>
<dbReference type="RefSeq" id="XP_015621160.1">
    <property type="nucleotide sequence ID" value="XM_015765674.1"/>
</dbReference>
<dbReference type="SMR" id="P37833"/>
<dbReference type="FunCoup" id="P37833">
    <property type="interactions" value="2193"/>
</dbReference>
<dbReference type="STRING" id="39947.P37833"/>
<dbReference type="PaxDb" id="39947-P37833"/>
<dbReference type="EnsemblPlants" id="Os01t0760600-04">
    <property type="protein sequence ID" value="Os01t0760600-04"/>
    <property type="gene ID" value="Os01g0760600"/>
</dbReference>
<dbReference type="Gramene" id="Os01t0760600-04">
    <property type="protein sequence ID" value="Os01t0760600-04"/>
    <property type="gene ID" value="Os01g0760600"/>
</dbReference>
<dbReference type="eggNOG" id="KOG1411">
    <property type="taxonomic scope" value="Eukaryota"/>
</dbReference>
<dbReference type="HOGENOM" id="CLU_032440_1_2_1"/>
<dbReference type="InParanoid" id="P37833"/>
<dbReference type="OrthoDB" id="6752799at2759"/>
<dbReference type="PlantReactome" id="R-OSA-1119281">
    <property type="pathway name" value="Aspartate biosynthesis I"/>
</dbReference>
<dbReference type="PlantReactome" id="R-OSA-1119393">
    <property type="pathway name" value="Asparagine degradation I"/>
</dbReference>
<dbReference type="PlantReactome" id="R-OSA-1119553">
    <property type="pathway name" value="Asparagine biosynthesis"/>
</dbReference>
<dbReference type="Proteomes" id="UP000000763">
    <property type="component" value="Chromosome 1"/>
</dbReference>
<dbReference type="Proteomes" id="UP000059680">
    <property type="component" value="Chromosome 1"/>
</dbReference>
<dbReference type="ExpressionAtlas" id="P37833">
    <property type="expression patterns" value="baseline and differential"/>
</dbReference>
<dbReference type="GO" id="GO:0005737">
    <property type="term" value="C:cytoplasm"/>
    <property type="evidence" value="ECO:0000250"/>
    <property type="project" value="Gramene"/>
</dbReference>
<dbReference type="GO" id="GO:0005739">
    <property type="term" value="C:mitochondrion"/>
    <property type="evidence" value="ECO:0000318"/>
    <property type="project" value="GO_Central"/>
</dbReference>
<dbReference type="GO" id="GO:0004069">
    <property type="term" value="F:L-aspartate:2-oxoglutarate aminotransferase activity"/>
    <property type="evidence" value="ECO:0000250"/>
    <property type="project" value="UniProtKB"/>
</dbReference>
<dbReference type="GO" id="GO:0030170">
    <property type="term" value="F:pyridoxal phosphate binding"/>
    <property type="evidence" value="ECO:0007669"/>
    <property type="project" value="InterPro"/>
</dbReference>
<dbReference type="GO" id="GO:0006103">
    <property type="term" value="P:2-oxoglutarate metabolic process"/>
    <property type="evidence" value="ECO:0000250"/>
    <property type="project" value="UniProtKB"/>
</dbReference>
<dbReference type="GO" id="GO:0006522">
    <property type="term" value="P:alanine metabolic process"/>
    <property type="evidence" value="ECO:0000250"/>
    <property type="project" value="Gramene"/>
</dbReference>
<dbReference type="GO" id="GO:0006531">
    <property type="term" value="P:aspartate metabolic process"/>
    <property type="evidence" value="ECO:0000250"/>
    <property type="project" value="UniProtKB"/>
</dbReference>
<dbReference type="GO" id="GO:0009058">
    <property type="term" value="P:biosynthetic process"/>
    <property type="evidence" value="ECO:0007669"/>
    <property type="project" value="InterPro"/>
</dbReference>
<dbReference type="GO" id="GO:0006536">
    <property type="term" value="P:glutamate metabolic process"/>
    <property type="evidence" value="ECO:0000250"/>
    <property type="project" value="UniProtKB"/>
</dbReference>
<dbReference type="GO" id="GO:0006099">
    <property type="term" value="P:tricarboxylic acid cycle"/>
    <property type="evidence" value="ECO:0000250"/>
    <property type="project" value="Gramene"/>
</dbReference>
<dbReference type="CDD" id="cd00609">
    <property type="entry name" value="AAT_like"/>
    <property type="match status" value="1"/>
</dbReference>
<dbReference type="FunFam" id="3.40.640.10:FF:000052">
    <property type="entry name" value="Aspartate aminotransferase"/>
    <property type="match status" value="1"/>
</dbReference>
<dbReference type="FunFam" id="3.90.1150.10:FF:000001">
    <property type="entry name" value="Aspartate aminotransferase"/>
    <property type="match status" value="1"/>
</dbReference>
<dbReference type="Gene3D" id="3.90.1150.10">
    <property type="entry name" value="Aspartate Aminotransferase, domain 1"/>
    <property type="match status" value="1"/>
</dbReference>
<dbReference type="Gene3D" id="3.40.640.10">
    <property type="entry name" value="Type I PLP-dependent aspartate aminotransferase-like (Major domain)"/>
    <property type="match status" value="1"/>
</dbReference>
<dbReference type="InterPro" id="IPR004839">
    <property type="entry name" value="Aminotransferase_I/II_large"/>
</dbReference>
<dbReference type="InterPro" id="IPR000796">
    <property type="entry name" value="Asp_trans"/>
</dbReference>
<dbReference type="InterPro" id="IPR004838">
    <property type="entry name" value="NHTrfase_class1_PyrdxlP-BS"/>
</dbReference>
<dbReference type="InterPro" id="IPR015424">
    <property type="entry name" value="PyrdxlP-dep_Trfase"/>
</dbReference>
<dbReference type="InterPro" id="IPR015421">
    <property type="entry name" value="PyrdxlP-dep_Trfase_major"/>
</dbReference>
<dbReference type="InterPro" id="IPR015422">
    <property type="entry name" value="PyrdxlP-dep_Trfase_small"/>
</dbReference>
<dbReference type="NCBIfam" id="NF006719">
    <property type="entry name" value="PRK09257.1"/>
    <property type="match status" value="1"/>
</dbReference>
<dbReference type="PANTHER" id="PTHR11879">
    <property type="entry name" value="ASPARTATE AMINOTRANSFERASE"/>
    <property type="match status" value="1"/>
</dbReference>
<dbReference type="PANTHER" id="PTHR11879:SF22">
    <property type="entry name" value="ASPARTATE AMINOTRANSFERASE, MITOCHONDRIAL"/>
    <property type="match status" value="1"/>
</dbReference>
<dbReference type="Pfam" id="PF00155">
    <property type="entry name" value="Aminotran_1_2"/>
    <property type="match status" value="1"/>
</dbReference>
<dbReference type="PRINTS" id="PR00799">
    <property type="entry name" value="TRANSAMINASE"/>
</dbReference>
<dbReference type="SUPFAM" id="SSF53383">
    <property type="entry name" value="PLP-dependent transferases"/>
    <property type="match status" value="1"/>
</dbReference>
<dbReference type="PROSITE" id="PS00105">
    <property type="entry name" value="AA_TRANSFER_CLASS_1"/>
    <property type="match status" value="1"/>
</dbReference>
<reference key="1">
    <citation type="journal article" date="1996" name="DNA Res.">
        <title>Characterization and mapping of cDNA encoding aspartate aminotransferase in rice, Oryza sativa L.</title>
        <authorList>
            <person name="Song J."/>
            <person name="Sasaki T."/>
            <person name="Minobe Y."/>
        </authorList>
    </citation>
    <scope>NUCLEOTIDE SEQUENCE [MRNA]</scope>
    <source>
        <strain>cv. Nipponbare</strain>
        <tissue>Callus</tissue>
    </source>
</reference>
<reference key="2">
    <citation type="journal article" date="2005" name="Plant Cell">
        <title>Functional isolation of novel nuclear proteins showing a variety of subnuclear localizations.</title>
        <authorList>
            <person name="Moriguchi K."/>
            <person name="Suzuki T."/>
            <person name="Ito Y."/>
            <person name="Yamazaki Y."/>
            <person name="Niwa Y."/>
            <person name="Kurata N."/>
        </authorList>
    </citation>
    <scope>NUCLEOTIDE SEQUENCE [MRNA]</scope>
    <source>
        <tissue>Callus</tissue>
    </source>
</reference>
<reference key="3">
    <citation type="journal article" date="2002" name="Nature">
        <title>The genome sequence and structure of rice chromosome 1.</title>
        <authorList>
            <person name="Sasaki T."/>
            <person name="Matsumoto T."/>
            <person name="Yamamoto K."/>
            <person name="Sakata K."/>
            <person name="Baba T."/>
            <person name="Katayose Y."/>
            <person name="Wu J."/>
            <person name="Niimura Y."/>
            <person name="Cheng Z."/>
            <person name="Nagamura Y."/>
            <person name="Antonio B.A."/>
            <person name="Kanamori H."/>
            <person name="Hosokawa S."/>
            <person name="Masukawa M."/>
            <person name="Arikawa K."/>
            <person name="Chiden Y."/>
            <person name="Hayashi M."/>
            <person name="Okamoto M."/>
            <person name="Ando T."/>
            <person name="Aoki H."/>
            <person name="Arita K."/>
            <person name="Hamada M."/>
            <person name="Harada C."/>
            <person name="Hijishita S."/>
            <person name="Honda M."/>
            <person name="Ichikawa Y."/>
            <person name="Idonuma A."/>
            <person name="Iijima M."/>
            <person name="Ikeda M."/>
            <person name="Ikeno M."/>
            <person name="Ito S."/>
            <person name="Ito T."/>
            <person name="Ito Y."/>
            <person name="Ito Y."/>
            <person name="Iwabuchi A."/>
            <person name="Kamiya K."/>
            <person name="Karasawa W."/>
            <person name="Katagiri S."/>
            <person name="Kikuta A."/>
            <person name="Kobayashi N."/>
            <person name="Kono I."/>
            <person name="Machita K."/>
            <person name="Maehara T."/>
            <person name="Mizuno H."/>
            <person name="Mizubayashi T."/>
            <person name="Mukai Y."/>
            <person name="Nagasaki H."/>
            <person name="Nakashima M."/>
            <person name="Nakama Y."/>
            <person name="Nakamichi Y."/>
            <person name="Nakamura M."/>
            <person name="Namiki N."/>
            <person name="Negishi M."/>
            <person name="Ohta I."/>
            <person name="Ono N."/>
            <person name="Saji S."/>
            <person name="Sakai K."/>
            <person name="Shibata M."/>
            <person name="Shimokawa T."/>
            <person name="Shomura A."/>
            <person name="Song J."/>
            <person name="Takazaki Y."/>
            <person name="Terasawa K."/>
            <person name="Tsuji K."/>
            <person name="Waki K."/>
            <person name="Yamagata H."/>
            <person name="Yamane H."/>
            <person name="Yoshiki S."/>
            <person name="Yoshihara R."/>
            <person name="Yukawa K."/>
            <person name="Zhong H."/>
            <person name="Iwama H."/>
            <person name="Endo T."/>
            <person name="Ito H."/>
            <person name="Hahn J.H."/>
            <person name="Kim H.-I."/>
            <person name="Eun M.-Y."/>
            <person name="Yano M."/>
            <person name="Jiang J."/>
            <person name="Gojobori T."/>
        </authorList>
    </citation>
    <scope>NUCLEOTIDE SEQUENCE [LARGE SCALE GENOMIC DNA]</scope>
    <source>
        <strain>cv. Nipponbare</strain>
    </source>
</reference>
<reference key="4">
    <citation type="journal article" date="2005" name="Nature">
        <title>The map-based sequence of the rice genome.</title>
        <authorList>
            <consortium name="International rice genome sequencing project (IRGSP)"/>
        </authorList>
    </citation>
    <scope>NUCLEOTIDE SEQUENCE [LARGE SCALE GENOMIC DNA]</scope>
    <source>
        <strain>cv. Nipponbare</strain>
    </source>
</reference>
<reference key="5">
    <citation type="journal article" date="2013" name="Rice">
        <title>Improvement of the Oryza sativa Nipponbare reference genome using next generation sequence and optical map data.</title>
        <authorList>
            <person name="Kawahara Y."/>
            <person name="de la Bastide M."/>
            <person name="Hamilton J.P."/>
            <person name="Kanamori H."/>
            <person name="McCombie W.R."/>
            <person name="Ouyang S."/>
            <person name="Schwartz D.C."/>
            <person name="Tanaka T."/>
            <person name="Wu J."/>
            <person name="Zhou S."/>
            <person name="Childs K.L."/>
            <person name="Davidson R.M."/>
            <person name="Lin H."/>
            <person name="Quesada-Ocampo L."/>
            <person name="Vaillancourt B."/>
            <person name="Sakai H."/>
            <person name="Lee S.S."/>
            <person name="Kim J."/>
            <person name="Numa H."/>
            <person name="Itoh T."/>
            <person name="Buell C.R."/>
            <person name="Matsumoto T."/>
        </authorList>
    </citation>
    <scope>GENOME REANNOTATION</scope>
    <source>
        <strain>cv. Nipponbare</strain>
    </source>
</reference>
<comment type="function">
    <text>Important for the metabolism of amino acids and Krebs-cycle related organic acids. In plants, it is involved in nitrogen metabolism and in aspects of carbon and energy metabolism.</text>
</comment>
<comment type="catalytic activity">
    <reaction>
        <text>L-aspartate + 2-oxoglutarate = oxaloacetate + L-glutamate</text>
        <dbReference type="Rhea" id="RHEA:21824"/>
        <dbReference type="ChEBI" id="CHEBI:16452"/>
        <dbReference type="ChEBI" id="CHEBI:16810"/>
        <dbReference type="ChEBI" id="CHEBI:29985"/>
        <dbReference type="ChEBI" id="CHEBI:29991"/>
        <dbReference type="EC" id="2.6.1.1"/>
    </reaction>
</comment>
<comment type="cofactor">
    <cofactor>
        <name>pyridoxal 5'-phosphate</name>
        <dbReference type="ChEBI" id="CHEBI:597326"/>
    </cofactor>
</comment>
<comment type="subunit">
    <text evidence="1">Homodimer.</text>
</comment>
<comment type="subcellular location">
    <subcellularLocation>
        <location evidence="1">Cytoplasm</location>
    </subcellularLocation>
</comment>
<comment type="miscellaneous">
    <text>In eukaryotes there are cytoplasmic, mitochondrial and chloroplastic isozymes.</text>
</comment>
<comment type="similarity">
    <text evidence="2">Belongs to the class-I pyridoxal-phosphate-dependent aminotransferase family.</text>
</comment>
<comment type="sequence caution" evidence="2">
    <conflict type="erroneous gene model prediction">
        <sequence resource="EMBL-CDS" id="BAD87343"/>
    </conflict>
</comment>
<accession>P37833</accession>
<accession>Q5JMF4</accession>
<accession>Q7F594</accession>
<feature type="chain" id="PRO_0000123874" description="Aspartate aminotransferase, cytoplasmic">
    <location>
        <begin position="1"/>
        <end position="407"/>
    </location>
</feature>
<feature type="binding site" evidence="1">
    <location>
        <position position="39"/>
    </location>
    <ligand>
        <name>L-aspartate</name>
        <dbReference type="ChEBI" id="CHEBI:29991"/>
    </ligand>
</feature>
<feature type="binding site" evidence="1">
    <location>
        <position position="136"/>
    </location>
    <ligand>
        <name>L-aspartate</name>
        <dbReference type="ChEBI" id="CHEBI:29991"/>
    </ligand>
</feature>
<feature type="binding site" evidence="1">
    <location>
        <position position="189"/>
    </location>
    <ligand>
        <name>L-aspartate</name>
        <dbReference type="ChEBI" id="CHEBI:29991"/>
    </ligand>
</feature>
<feature type="binding site" evidence="1">
    <location>
        <position position="381"/>
    </location>
    <ligand>
        <name>L-aspartate</name>
        <dbReference type="ChEBI" id="CHEBI:29991"/>
    </ligand>
</feature>
<feature type="modified residue" description="N6-(pyridoxal phosphate)lysine" evidence="1">
    <location>
        <position position="253"/>
    </location>
</feature>
<gene>
    <name type="ordered locus">Os01g0760600</name>
    <name type="ordered locus">LOC_Os01g55540</name>
    <name type="ORF">P0460E08.21</name>
    <name type="ORF">P0512C01.10</name>
</gene>
<protein>
    <recommendedName>
        <fullName>Aspartate aminotransferase, cytoplasmic</fullName>
        <ecNumber>2.6.1.1</ecNumber>
    </recommendedName>
    <alternativeName>
        <fullName>Transaminase A</fullName>
    </alternativeName>
</protein>
<proteinExistence type="evidence at transcript level"/>
<sequence>MASSSVFAGLAQAPEDPILGVTVAYNKDPSPVKVNLGVGAYRTEEGKPLVLNVVRRAEQMLINNPSRVKEYLPITGLADFNKLSAKLIFGADSPAIQENRVATVQCLSGTGSLRVGGEFLARHYHERTIYIPQPTWGNHPKVFTLAGLTVRSYRYYDPATRGLDFQGLLEDLGSAPSGAIVLLHACAHNPTGVDPTLDQWEQIRQLMRSKALLPFFDSAYQGFASGSLDQDAQSVRMFVADGGELLMAQSYAKNMGLYGERVGALSIVCGSADVAVRVESQLKLVIRPMYSNPPIHGASIVATILKDSAMFNEWTVELKGMADRIISMRQQLFDALKTRETPGDWSHIIKQIGMFTFTGLNSDQVAFMRQEYHIYMTSDGRISMAGLSGRTIPHLADAIHAAVTKLK</sequence>